<comment type="function">
    <text evidence="1">Involved in both the arginine and lysine biosynthetic pathways. Phosphorylates the LysW-bound precursors glutamate (for arginine biosynthesis), respectively alpha-aminoadipate (for lysine biosynthesis).</text>
</comment>
<comment type="catalytic activity">
    <reaction evidence="1">
        <text>[amino-group carrier protein]-C-terminal-N-(1,4-dicarboxybutan-1-yl)-L-glutamine + ATP = [amino-group carrier protein]-C-terminal-N-(1-carboxy-5-phosphooxy-5-oxopentan-1-yl)-L-glutamine + ADP</text>
        <dbReference type="Rhea" id="RHEA:41944"/>
        <dbReference type="Rhea" id="RHEA-COMP:9694"/>
        <dbReference type="Rhea" id="RHEA-COMP:9712"/>
        <dbReference type="ChEBI" id="CHEBI:30616"/>
        <dbReference type="ChEBI" id="CHEBI:78499"/>
        <dbReference type="ChEBI" id="CHEBI:78503"/>
        <dbReference type="ChEBI" id="CHEBI:456216"/>
        <dbReference type="EC" id="2.7.2.17"/>
    </reaction>
</comment>
<comment type="catalytic activity">
    <reaction evidence="1">
        <text>[amino-group carrier protein]-C-terminal-gamma-(L-glutamyl)-L-glutamate + ATP = [amino-group carrier protein]-C-terminal-gamma-(5-phospho-L-glutamyl)-L-glutamate + ADP</text>
        <dbReference type="Rhea" id="RHEA:52632"/>
        <dbReference type="Rhea" id="RHEA-COMP:13311"/>
        <dbReference type="Rhea" id="RHEA-COMP:13313"/>
        <dbReference type="ChEBI" id="CHEBI:30616"/>
        <dbReference type="ChEBI" id="CHEBI:136714"/>
        <dbReference type="ChEBI" id="CHEBI:136717"/>
        <dbReference type="ChEBI" id="CHEBI:456216"/>
        <dbReference type="EC" id="2.7.2.19"/>
    </reaction>
</comment>
<comment type="pathway">
    <text evidence="1">Amino-acid biosynthesis; L-lysine biosynthesis via AAA pathway; L-lysine from L-alpha-aminoadipate (Thermus route): step 2/5.</text>
</comment>
<comment type="pathway">
    <text evidence="1">Amino-acid biosynthesis; L-arginine biosynthesis.</text>
</comment>
<comment type="subcellular location">
    <subcellularLocation>
        <location evidence="1">Cytoplasm</location>
    </subcellularLocation>
</comment>
<comment type="similarity">
    <text evidence="1">Belongs to the acetylglutamate kinase family. LysZ subfamily.</text>
</comment>
<dbReference type="EC" id="2.7.2.17" evidence="1"/>
<dbReference type="EC" id="2.7.2.19" evidence="1"/>
<dbReference type="EMBL" id="CP001399">
    <property type="protein sequence ID" value="ACP36136.1"/>
    <property type="molecule type" value="Genomic_DNA"/>
</dbReference>
<dbReference type="RefSeq" id="WP_012711951.1">
    <property type="nucleotide sequence ID" value="NC_012589.1"/>
</dbReference>
<dbReference type="SMR" id="C3MJ49"/>
<dbReference type="KEGG" id="sis:LS215_2148"/>
<dbReference type="HOGENOM" id="CLU_053680_2_0_2"/>
<dbReference type="OrthoDB" id="6816at2157"/>
<dbReference type="UniPathway" id="UPA00033">
    <property type="reaction ID" value="UER00036"/>
</dbReference>
<dbReference type="UniPathway" id="UPA00068"/>
<dbReference type="Proteomes" id="UP000001747">
    <property type="component" value="Chromosome"/>
</dbReference>
<dbReference type="GO" id="GO:0005737">
    <property type="term" value="C:cytoplasm"/>
    <property type="evidence" value="ECO:0007669"/>
    <property type="project" value="UniProtKB-SubCell"/>
</dbReference>
<dbReference type="GO" id="GO:0003991">
    <property type="term" value="F:acetylglutamate kinase activity"/>
    <property type="evidence" value="ECO:0007669"/>
    <property type="project" value="TreeGrafter"/>
</dbReference>
<dbReference type="GO" id="GO:0005524">
    <property type="term" value="F:ATP binding"/>
    <property type="evidence" value="ECO:0007669"/>
    <property type="project" value="UniProtKB-KW"/>
</dbReference>
<dbReference type="GO" id="GO:0043744">
    <property type="term" value="F:N2-acetyl-L-aminoadipate kinase activity"/>
    <property type="evidence" value="ECO:0007669"/>
    <property type="project" value="RHEA"/>
</dbReference>
<dbReference type="GO" id="GO:0042450">
    <property type="term" value="P:arginine biosynthetic process via ornithine"/>
    <property type="evidence" value="ECO:0007669"/>
    <property type="project" value="UniProtKB-UniRule"/>
</dbReference>
<dbReference type="GO" id="GO:0006526">
    <property type="term" value="P:L-arginine biosynthetic process"/>
    <property type="evidence" value="ECO:0007669"/>
    <property type="project" value="UniProtKB-UniPathway"/>
</dbReference>
<dbReference type="GO" id="GO:0019878">
    <property type="term" value="P:lysine biosynthetic process via aminoadipic acid"/>
    <property type="evidence" value="ECO:0007669"/>
    <property type="project" value="UniProtKB-UniRule"/>
</dbReference>
<dbReference type="CDD" id="cd04251">
    <property type="entry name" value="AAK_NAGK-UC"/>
    <property type="match status" value="1"/>
</dbReference>
<dbReference type="Gene3D" id="3.40.1160.10">
    <property type="entry name" value="Acetylglutamate kinase-like"/>
    <property type="match status" value="1"/>
</dbReference>
<dbReference type="HAMAP" id="MF_02082">
    <property type="entry name" value="LysZ"/>
    <property type="match status" value="1"/>
</dbReference>
<dbReference type="InterPro" id="IPR036393">
    <property type="entry name" value="AceGlu_kinase-like_sf"/>
</dbReference>
<dbReference type="InterPro" id="IPR004662">
    <property type="entry name" value="AcgluKinase_fam"/>
</dbReference>
<dbReference type="InterPro" id="IPR001048">
    <property type="entry name" value="Asp/Glu/Uridylate_kinase"/>
</dbReference>
<dbReference type="InterPro" id="IPR037529">
    <property type="entry name" value="LysZ"/>
</dbReference>
<dbReference type="NCBIfam" id="TIGR00761">
    <property type="entry name" value="argB"/>
    <property type="match status" value="1"/>
</dbReference>
<dbReference type="NCBIfam" id="NF010662">
    <property type="entry name" value="PRK14058.1-4"/>
    <property type="match status" value="1"/>
</dbReference>
<dbReference type="PANTHER" id="PTHR23342">
    <property type="entry name" value="N-ACETYLGLUTAMATE SYNTHASE"/>
    <property type="match status" value="1"/>
</dbReference>
<dbReference type="PANTHER" id="PTHR23342:SF0">
    <property type="entry name" value="N-ACETYLGLUTAMATE SYNTHASE, MITOCHONDRIAL"/>
    <property type="match status" value="1"/>
</dbReference>
<dbReference type="Pfam" id="PF00696">
    <property type="entry name" value="AA_kinase"/>
    <property type="match status" value="1"/>
</dbReference>
<dbReference type="PIRSF" id="PIRSF000728">
    <property type="entry name" value="NAGK"/>
    <property type="match status" value="1"/>
</dbReference>
<dbReference type="SUPFAM" id="SSF53633">
    <property type="entry name" value="Carbamate kinase-like"/>
    <property type="match status" value="1"/>
</dbReference>
<feature type="chain" id="PRO_1000202570" description="[LysW]-aminoadipate/[LysW]-glutamate kinase">
    <location>
        <begin position="1"/>
        <end position="264"/>
    </location>
</feature>
<feature type="binding site" evidence="1">
    <location>
        <begin position="35"/>
        <end position="36"/>
    </location>
    <ligand>
        <name>substrate</name>
    </ligand>
</feature>
<feature type="binding site" evidence="1">
    <location>
        <position position="62"/>
    </location>
    <ligand>
        <name>substrate</name>
    </ligand>
</feature>
<feature type="binding site" evidence="1">
    <location>
        <position position="167"/>
    </location>
    <ligand>
        <name>substrate</name>
    </ligand>
</feature>
<feature type="site" description="Transition state stabilizer" evidence="1">
    <location>
        <position position="5"/>
    </location>
</feature>
<feature type="site" description="Transition state stabilizer" evidence="1">
    <location>
        <position position="224"/>
    </location>
</feature>
<name>LYSZ_SACI2</name>
<organism>
    <name type="scientific">Saccharolobus islandicus (strain L.S.2.15 / Lassen #1)</name>
    <name type="common">Sulfolobus islandicus</name>
    <dbReference type="NCBI Taxonomy" id="429572"/>
    <lineage>
        <taxon>Archaea</taxon>
        <taxon>Thermoproteota</taxon>
        <taxon>Thermoprotei</taxon>
        <taxon>Sulfolobales</taxon>
        <taxon>Sulfolobaceae</taxon>
        <taxon>Saccharolobus</taxon>
    </lineage>
</organism>
<keyword id="KW-0028">Amino-acid biosynthesis</keyword>
<keyword id="KW-0055">Arginine biosynthesis</keyword>
<keyword id="KW-0067">ATP-binding</keyword>
<keyword id="KW-0963">Cytoplasm</keyword>
<keyword id="KW-0418">Kinase</keyword>
<keyword id="KW-0457">Lysine biosynthesis</keyword>
<keyword id="KW-0547">Nucleotide-binding</keyword>
<keyword id="KW-0808">Transferase</keyword>
<reference key="1">
    <citation type="journal article" date="2009" name="Proc. Natl. Acad. Sci. U.S.A.">
        <title>Biogeography of the Sulfolobus islandicus pan-genome.</title>
        <authorList>
            <person name="Reno M.L."/>
            <person name="Held N.L."/>
            <person name="Fields C.J."/>
            <person name="Burke P.V."/>
            <person name="Whitaker R.J."/>
        </authorList>
    </citation>
    <scope>NUCLEOTIDE SEQUENCE [LARGE SCALE GENOMIC DNA]</scope>
    <source>
        <strain>L.S.2.15 / Lassen #1</strain>
    </source>
</reference>
<proteinExistence type="inferred from homology"/>
<gene>
    <name evidence="1" type="primary">lysZ</name>
    <name type="ordered locus">LS215_2148</name>
</gene>
<protein>
    <recommendedName>
        <fullName evidence="1">[LysW]-aminoadipate/[LysW]-glutamate kinase</fullName>
        <ecNumber evidence="1">2.7.2.17</ecNumber>
        <ecNumber evidence="1">2.7.2.19</ecNumber>
    </recommendedName>
</protein>
<evidence type="ECO:0000255" key="1">
    <source>
        <dbReference type="HAMAP-Rule" id="MF_02082"/>
    </source>
</evidence>
<sequence length="264" mass="28434">MIVVKIGGRVVKNSLDKVILDIANINDKVILVHGGGDIVTDYTKRLGIEPVFVTSPEGIRSRYTTKEELEVYIMAMSLINKTITSKLCSLGKNAIGITGVDGGLLLAERKKRIIVIDERGKKRIIEGGYTGKVKEVRSEVINHLMKLFDIIVVSPLALDVEESTPLNIDGDQAAFAISKAVKVNVLVILSDVEGVLVEGKVVDRLTPEEAKELSKKIGPGMNRKLLMAAESVENGVNKVIIGSGVKDRPVSSALELNGTVIVNG</sequence>
<accession>C3MJ49</accession>